<feature type="chain" id="PRO_0000302912" description="S-adenosylmethionine synthase">
    <location>
        <begin position="1"/>
        <end position="384"/>
    </location>
</feature>
<feature type="region of interest" description="Flexible loop" evidence="1">
    <location>
        <begin position="99"/>
        <end position="109"/>
    </location>
</feature>
<feature type="binding site" description="in other chain" evidence="1">
    <location>
        <position position="15"/>
    </location>
    <ligand>
        <name>ATP</name>
        <dbReference type="ChEBI" id="CHEBI:30616"/>
        <note>ligand shared between two neighboring subunits</note>
    </ligand>
</feature>
<feature type="binding site" evidence="1">
    <location>
        <position position="17"/>
    </location>
    <ligand>
        <name>Mg(2+)</name>
        <dbReference type="ChEBI" id="CHEBI:18420"/>
    </ligand>
</feature>
<feature type="binding site" evidence="1">
    <location>
        <position position="43"/>
    </location>
    <ligand>
        <name>K(+)</name>
        <dbReference type="ChEBI" id="CHEBI:29103"/>
    </ligand>
</feature>
<feature type="binding site" description="in other chain" evidence="1">
    <location>
        <position position="56"/>
    </location>
    <ligand>
        <name>L-methionine</name>
        <dbReference type="ChEBI" id="CHEBI:57844"/>
        <note>ligand shared between two neighboring subunits</note>
    </ligand>
</feature>
<feature type="binding site" description="in other chain" evidence="1">
    <location>
        <position position="99"/>
    </location>
    <ligand>
        <name>L-methionine</name>
        <dbReference type="ChEBI" id="CHEBI:57844"/>
        <note>ligand shared between two neighboring subunits</note>
    </ligand>
</feature>
<feature type="binding site" description="in other chain" evidence="1">
    <location>
        <begin position="164"/>
        <end position="166"/>
    </location>
    <ligand>
        <name>ATP</name>
        <dbReference type="ChEBI" id="CHEBI:30616"/>
        <note>ligand shared between two neighboring subunits</note>
    </ligand>
</feature>
<feature type="binding site" description="in other chain" evidence="1">
    <location>
        <begin position="230"/>
        <end position="231"/>
    </location>
    <ligand>
        <name>ATP</name>
        <dbReference type="ChEBI" id="CHEBI:30616"/>
        <note>ligand shared between two neighboring subunits</note>
    </ligand>
</feature>
<feature type="binding site" evidence="1">
    <location>
        <position position="239"/>
    </location>
    <ligand>
        <name>ATP</name>
        <dbReference type="ChEBI" id="CHEBI:30616"/>
        <note>ligand shared between two neighboring subunits</note>
    </ligand>
</feature>
<feature type="binding site" evidence="1">
    <location>
        <position position="239"/>
    </location>
    <ligand>
        <name>L-methionine</name>
        <dbReference type="ChEBI" id="CHEBI:57844"/>
        <note>ligand shared between two neighboring subunits</note>
    </ligand>
</feature>
<feature type="binding site" description="in other chain" evidence="1">
    <location>
        <begin position="245"/>
        <end position="246"/>
    </location>
    <ligand>
        <name>ATP</name>
        <dbReference type="ChEBI" id="CHEBI:30616"/>
        <note>ligand shared between two neighboring subunits</note>
    </ligand>
</feature>
<feature type="binding site" evidence="1">
    <location>
        <position position="262"/>
    </location>
    <ligand>
        <name>ATP</name>
        <dbReference type="ChEBI" id="CHEBI:30616"/>
        <note>ligand shared between two neighboring subunits</note>
    </ligand>
</feature>
<feature type="binding site" evidence="1">
    <location>
        <position position="266"/>
    </location>
    <ligand>
        <name>ATP</name>
        <dbReference type="ChEBI" id="CHEBI:30616"/>
        <note>ligand shared between two neighboring subunits</note>
    </ligand>
</feature>
<feature type="binding site" description="in other chain" evidence="1">
    <location>
        <position position="270"/>
    </location>
    <ligand>
        <name>L-methionine</name>
        <dbReference type="ChEBI" id="CHEBI:57844"/>
        <note>ligand shared between two neighboring subunits</note>
    </ligand>
</feature>
<sequence>MAKHLFTSESVSEGHPDKIADQISDAVLDAILEQDPKARVACETYVKTGMVLVGGEITTSAWVDIEEITRNTVREIGYVHSDMGFDANSCAVLSAIGKQSPDINQGVDRADPLEQGAGDQGLMFGYATNETDVLMPAPITYAHRLVQRQAEVRKNGTLPWLRPDAKSQVTFQYDDGKIVGIDAVVLSTQHSEEIDQKSLQEAVMEEIIKPILPAEWLTSATKFFINPTGRFVIGGPMGDCGLTGRKIIVDTYGGMARHGGGAFSGKDPSKVDRSAAYAARYVAKNIVAAGLADRCEIQVSYAIGVAEPTSIMVETFGTEKVPSEQLTLLVREFFDLRPYGLIQMLDLLHPIYKETAAYGHFGREHFPWEKTDKAQLLRDAAGLK</sequence>
<gene>
    <name evidence="1" type="primary">metK</name>
    <name type="ordered locus">ECP_2935</name>
</gene>
<protein>
    <recommendedName>
        <fullName evidence="1">S-adenosylmethionine synthase</fullName>
        <shortName evidence="1">AdoMet synthase</shortName>
        <ecNumber evidence="1">2.5.1.6</ecNumber>
    </recommendedName>
    <alternativeName>
        <fullName evidence="1">MAT</fullName>
    </alternativeName>
    <alternativeName>
        <fullName evidence="1">Methionine adenosyltransferase</fullName>
    </alternativeName>
</protein>
<organism>
    <name type="scientific">Escherichia coli O6:K15:H31 (strain 536 / UPEC)</name>
    <dbReference type="NCBI Taxonomy" id="362663"/>
    <lineage>
        <taxon>Bacteria</taxon>
        <taxon>Pseudomonadati</taxon>
        <taxon>Pseudomonadota</taxon>
        <taxon>Gammaproteobacteria</taxon>
        <taxon>Enterobacterales</taxon>
        <taxon>Enterobacteriaceae</taxon>
        <taxon>Escherichia</taxon>
    </lineage>
</organism>
<reference key="1">
    <citation type="journal article" date="2006" name="Mol. Microbiol.">
        <title>Role of pathogenicity island-associated integrases in the genome plasticity of uropathogenic Escherichia coli strain 536.</title>
        <authorList>
            <person name="Hochhut B."/>
            <person name="Wilde C."/>
            <person name="Balling G."/>
            <person name="Middendorf B."/>
            <person name="Dobrindt U."/>
            <person name="Brzuszkiewicz E."/>
            <person name="Gottschalk G."/>
            <person name="Carniel E."/>
            <person name="Hacker J."/>
        </authorList>
    </citation>
    <scope>NUCLEOTIDE SEQUENCE [LARGE SCALE GENOMIC DNA]</scope>
    <source>
        <strain>536 / UPEC</strain>
    </source>
</reference>
<name>METK_ECOL5</name>
<dbReference type="EC" id="2.5.1.6" evidence="1"/>
<dbReference type="EMBL" id="CP000247">
    <property type="protein sequence ID" value="ABG70919.1"/>
    <property type="molecule type" value="Genomic_DNA"/>
</dbReference>
<dbReference type="RefSeq" id="WP_001062128.1">
    <property type="nucleotide sequence ID" value="NC_008253.1"/>
</dbReference>
<dbReference type="SMR" id="Q0TDR0"/>
<dbReference type="GeneID" id="93779055"/>
<dbReference type="KEGG" id="ecp:ECP_2935"/>
<dbReference type="HOGENOM" id="CLU_041802_1_1_6"/>
<dbReference type="UniPathway" id="UPA00315">
    <property type="reaction ID" value="UER00080"/>
</dbReference>
<dbReference type="Proteomes" id="UP000009182">
    <property type="component" value="Chromosome"/>
</dbReference>
<dbReference type="GO" id="GO:0005737">
    <property type="term" value="C:cytoplasm"/>
    <property type="evidence" value="ECO:0007669"/>
    <property type="project" value="UniProtKB-SubCell"/>
</dbReference>
<dbReference type="GO" id="GO:0005524">
    <property type="term" value="F:ATP binding"/>
    <property type="evidence" value="ECO:0007669"/>
    <property type="project" value="UniProtKB-UniRule"/>
</dbReference>
<dbReference type="GO" id="GO:0000287">
    <property type="term" value="F:magnesium ion binding"/>
    <property type="evidence" value="ECO:0007669"/>
    <property type="project" value="UniProtKB-UniRule"/>
</dbReference>
<dbReference type="GO" id="GO:0004478">
    <property type="term" value="F:methionine adenosyltransferase activity"/>
    <property type="evidence" value="ECO:0007669"/>
    <property type="project" value="UniProtKB-UniRule"/>
</dbReference>
<dbReference type="GO" id="GO:0006730">
    <property type="term" value="P:one-carbon metabolic process"/>
    <property type="evidence" value="ECO:0007669"/>
    <property type="project" value="UniProtKB-KW"/>
</dbReference>
<dbReference type="GO" id="GO:0006556">
    <property type="term" value="P:S-adenosylmethionine biosynthetic process"/>
    <property type="evidence" value="ECO:0007669"/>
    <property type="project" value="UniProtKB-UniRule"/>
</dbReference>
<dbReference type="CDD" id="cd18079">
    <property type="entry name" value="S-AdoMet_synt"/>
    <property type="match status" value="1"/>
</dbReference>
<dbReference type="FunFam" id="3.30.300.10:FF:000001">
    <property type="entry name" value="S-adenosylmethionine synthase"/>
    <property type="match status" value="1"/>
</dbReference>
<dbReference type="FunFam" id="3.30.300.10:FF:000003">
    <property type="entry name" value="S-adenosylmethionine synthase"/>
    <property type="match status" value="1"/>
</dbReference>
<dbReference type="Gene3D" id="3.30.300.10">
    <property type="match status" value="3"/>
</dbReference>
<dbReference type="HAMAP" id="MF_00086">
    <property type="entry name" value="S_AdoMet_synth1"/>
    <property type="match status" value="1"/>
</dbReference>
<dbReference type="InterPro" id="IPR022631">
    <property type="entry name" value="ADOMET_SYNTHASE_CS"/>
</dbReference>
<dbReference type="InterPro" id="IPR022630">
    <property type="entry name" value="S-AdoMet_synt_C"/>
</dbReference>
<dbReference type="InterPro" id="IPR022629">
    <property type="entry name" value="S-AdoMet_synt_central"/>
</dbReference>
<dbReference type="InterPro" id="IPR022628">
    <property type="entry name" value="S-AdoMet_synt_N"/>
</dbReference>
<dbReference type="InterPro" id="IPR002133">
    <property type="entry name" value="S-AdoMet_synthetase"/>
</dbReference>
<dbReference type="InterPro" id="IPR022636">
    <property type="entry name" value="S-AdoMet_synthetase_sfam"/>
</dbReference>
<dbReference type="NCBIfam" id="TIGR01034">
    <property type="entry name" value="metK"/>
    <property type="match status" value="1"/>
</dbReference>
<dbReference type="PANTHER" id="PTHR11964">
    <property type="entry name" value="S-ADENOSYLMETHIONINE SYNTHETASE"/>
    <property type="match status" value="1"/>
</dbReference>
<dbReference type="Pfam" id="PF02773">
    <property type="entry name" value="S-AdoMet_synt_C"/>
    <property type="match status" value="1"/>
</dbReference>
<dbReference type="Pfam" id="PF02772">
    <property type="entry name" value="S-AdoMet_synt_M"/>
    <property type="match status" value="1"/>
</dbReference>
<dbReference type="Pfam" id="PF00438">
    <property type="entry name" value="S-AdoMet_synt_N"/>
    <property type="match status" value="1"/>
</dbReference>
<dbReference type="PIRSF" id="PIRSF000497">
    <property type="entry name" value="MAT"/>
    <property type="match status" value="1"/>
</dbReference>
<dbReference type="SUPFAM" id="SSF55973">
    <property type="entry name" value="S-adenosylmethionine synthetase"/>
    <property type="match status" value="3"/>
</dbReference>
<dbReference type="PROSITE" id="PS00376">
    <property type="entry name" value="ADOMET_SYNTHASE_1"/>
    <property type="match status" value="1"/>
</dbReference>
<dbReference type="PROSITE" id="PS00377">
    <property type="entry name" value="ADOMET_SYNTHASE_2"/>
    <property type="match status" value="1"/>
</dbReference>
<accession>Q0TDR0</accession>
<evidence type="ECO:0000255" key="1">
    <source>
        <dbReference type="HAMAP-Rule" id="MF_00086"/>
    </source>
</evidence>
<comment type="function">
    <text evidence="1">Catalyzes the formation of S-adenosylmethionine (AdoMet) from methionine and ATP. The overall synthetic reaction is composed of two sequential steps, AdoMet formation and the subsequent tripolyphosphate hydrolysis which occurs prior to release of AdoMet from the enzyme.</text>
</comment>
<comment type="catalytic activity">
    <reaction evidence="1">
        <text>L-methionine + ATP + H2O = S-adenosyl-L-methionine + phosphate + diphosphate</text>
        <dbReference type="Rhea" id="RHEA:21080"/>
        <dbReference type="ChEBI" id="CHEBI:15377"/>
        <dbReference type="ChEBI" id="CHEBI:30616"/>
        <dbReference type="ChEBI" id="CHEBI:33019"/>
        <dbReference type="ChEBI" id="CHEBI:43474"/>
        <dbReference type="ChEBI" id="CHEBI:57844"/>
        <dbReference type="ChEBI" id="CHEBI:59789"/>
        <dbReference type="EC" id="2.5.1.6"/>
    </reaction>
</comment>
<comment type="cofactor">
    <cofactor evidence="1">
        <name>Mg(2+)</name>
        <dbReference type="ChEBI" id="CHEBI:18420"/>
    </cofactor>
    <text evidence="1">Binds 2 divalent ions per subunit.</text>
</comment>
<comment type="cofactor">
    <cofactor evidence="1">
        <name>K(+)</name>
        <dbReference type="ChEBI" id="CHEBI:29103"/>
    </cofactor>
    <text evidence="1">Binds 1 potassium ion per subunit.</text>
</comment>
<comment type="pathway">
    <text evidence="1">Amino-acid biosynthesis; S-adenosyl-L-methionine biosynthesis; S-adenosyl-L-methionine from L-methionine: step 1/1.</text>
</comment>
<comment type="subunit">
    <text evidence="1">Homotetramer; dimer of dimers.</text>
</comment>
<comment type="subcellular location">
    <subcellularLocation>
        <location evidence="1">Cytoplasm</location>
    </subcellularLocation>
</comment>
<comment type="similarity">
    <text evidence="1">Belongs to the AdoMet synthase family.</text>
</comment>
<keyword id="KW-0067">ATP-binding</keyword>
<keyword id="KW-0963">Cytoplasm</keyword>
<keyword id="KW-0460">Magnesium</keyword>
<keyword id="KW-0479">Metal-binding</keyword>
<keyword id="KW-0547">Nucleotide-binding</keyword>
<keyword id="KW-0554">One-carbon metabolism</keyword>
<keyword id="KW-0630">Potassium</keyword>
<keyword id="KW-0808">Transferase</keyword>
<proteinExistence type="inferred from homology"/>